<comment type="function">
    <text evidence="1">Minor protein of the capsid that localizes along the inner surface of the virion, within the central cavities beneath the L1 pentamers. Plays a role in capsid stabilization through interaction with the major capsid protein L1. Once the virion enters the host cell, L2 escorts the genomic DNA into the nucleus by promoting escape from the endosomal compartments and traffic through the host Golgi network. Mechanistically, the C-terminus of L2 possesses a cell-penetrating peptide that protudes from the host endosome, interacts with host cytoplasmic retromer cargo and thereby mediates the capsid delivery to the host trans-Golgi network. Plays a role through its interaction with host dynein in the intracellular microtubule-dependent transport of viral capsid toward the nucleus. Mediates the viral genome import into the nucleus through binding to host importins. Once within the nucleus, L2 localizes viral genomes to host PML bodies in order to activate early gene expression for establishment of infection. Later on, promotes late gene expression by interacting with the viral E2 protein and by inhibiting its transcriptional activation functions. During virion assembly, encapsidates the genome by direct interaction with the viral DNA.</text>
</comment>
<comment type="subunit">
    <text evidence="1">Interacts with major capsid protein L1. Interacts with E2; this interaction inhibits E2 transcriptional activity but not the DNA replication function E2. Interacts with host GADD45GIP1. Interacts with host HSPA8; this interaction is required for L2 nuclear translocation. Interacts with host importins KPNB2 and KPNB3. Forms a complex with importin alpha2-beta1 heterodimers via interaction with the importin alpha2 adapter. Interacts with host DYNLT1; this interaction is essential for virus intracellular transport during entry. Interacts (via C-terminus) with host retromer subunits VPS35 and VPS29.</text>
</comment>
<comment type="subcellular location">
    <subcellularLocation>
        <location evidence="1">Virion</location>
    </subcellularLocation>
    <subcellularLocation>
        <location evidence="1">Host nucleus</location>
    </subcellularLocation>
    <subcellularLocation>
        <location evidence="1">Host early endosome</location>
    </subcellularLocation>
    <subcellularLocation>
        <location evidence="1">Host Golgi apparatus</location>
    </subcellularLocation>
</comment>
<comment type="PTM">
    <text evidence="1">Highly phosphorylated.</text>
</comment>
<comment type="similarity">
    <text evidence="1">Belongs to the papillomaviridae L2 protein family.</text>
</comment>
<protein>
    <recommendedName>
        <fullName evidence="1">Minor capsid protein L2</fullName>
    </recommendedName>
</protein>
<organismHost>
    <name type="scientific">Homo sapiens</name>
    <name type="common">Human</name>
    <dbReference type="NCBI Taxonomy" id="9606"/>
</organismHost>
<dbReference type="EMBL" id="X74464">
    <property type="protein sequence ID" value="CAA52487.1"/>
    <property type="molecule type" value="Genomic_DNA"/>
</dbReference>
<dbReference type="PIR" id="S36594">
    <property type="entry name" value="S36594"/>
</dbReference>
<dbReference type="RefSeq" id="NP_041865.1">
    <property type="nucleotide sequence ID" value="NC_001596.1"/>
</dbReference>
<dbReference type="DNASU" id="1489483"/>
<dbReference type="GeneID" id="1489483"/>
<dbReference type="KEGG" id="vg:1489483"/>
<dbReference type="OrthoDB" id="8047at10239"/>
<dbReference type="Proteomes" id="UP000009104">
    <property type="component" value="Genome"/>
</dbReference>
<dbReference type="GO" id="GO:0043657">
    <property type="term" value="C:host cell"/>
    <property type="evidence" value="ECO:0007669"/>
    <property type="project" value="GOC"/>
</dbReference>
<dbReference type="GO" id="GO:0044174">
    <property type="term" value="C:host cell endosome"/>
    <property type="evidence" value="ECO:0007669"/>
    <property type="project" value="UniProtKB-KW"/>
</dbReference>
<dbReference type="GO" id="GO:0044177">
    <property type="term" value="C:host cell Golgi apparatus"/>
    <property type="evidence" value="ECO:0007669"/>
    <property type="project" value="UniProtKB-SubCell"/>
</dbReference>
<dbReference type="GO" id="GO:0042025">
    <property type="term" value="C:host cell nucleus"/>
    <property type="evidence" value="ECO:0007669"/>
    <property type="project" value="UniProtKB-SubCell"/>
</dbReference>
<dbReference type="GO" id="GO:0019028">
    <property type="term" value="C:viral capsid"/>
    <property type="evidence" value="ECO:0007669"/>
    <property type="project" value="UniProtKB-UniRule"/>
</dbReference>
<dbReference type="GO" id="GO:0003677">
    <property type="term" value="F:DNA binding"/>
    <property type="evidence" value="ECO:0007669"/>
    <property type="project" value="UniProtKB-UniRule"/>
</dbReference>
<dbReference type="GO" id="GO:0005198">
    <property type="term" value="F:structural molecule activity"/>
    <property type="evidence" value="ECO:0007669"/>
    <property type="project" value="UniProtKB-UniRule"/>
</dbReference>
<dbReference type="GO" id="GO:0075521">
    <property type="term" value="P:microtubule-dependent intracellular transport of viral material towards nucleus"/>
    <property type="evidence" value="ECO:0007669"/>
    <property type="project" value="UniProtKB-UniRule"/>
</dbReference>
<dbReference type="GO" id="GO:0046718">
    <property type="term" value="P:symbiont entry into host cell"/>
    <property type="evidence" value="ECO:0007669"/>
    <property type="project" value="UniProtKB-KW"/>
</dbReference>
<dbReference type="GO" id="GO:0075732">
    <property type="term" value="P:viral penetration into host nucleus"/>
    <property type="evidence" value="ECO:0007669"/>
    <property type="project" value="UniProtKB-KW"/>
</dbReference>
<dbReference type="HAMAP" id="MF_04003">
    <property type="entry name" value="PPV_L2"/>
    <property type="match status" value="1"/>
</dbReference>
<dbReference type="InterPro" id="IPR000784">
    <property type="entry name" value="Late_L2"/>
</dbReference>
<dbReference type="Pfam" id="PF00513">
    <property type="entry name" value="Late_protein_L2"/>
    <property type="match status" value="1"/>
</dbReference>
<name>VL2_HPV09</name>
<proteinExistence type="inferred from homology"/>
<sequence>MVRAKRTKRASVTDIYRGCKAAGTCPPDVINKVEHTTIADKILQYGSAGVFFGGLGISTGRGTGGATGYVPLGEGPGVRVGGTPTIVRPGVIPEIIGPTDLIPLDTVRPIDPTAPSIVTGTDSTVDLLPGEIESIAEIHPVPVDNAVVDTPVVTEGRRGSSAILEVADPSPPMRTRVARTQYHNPAFQIISESTPMSGESSLADHIIVFEGSGGQLVGGPRESYTASSENIELQEFPSRYSFEIDEGTPPRTSTPVQRAVQSLSSLRRALYNRRLTEQVAVTDPLFLSRPSRLVQFQFDNPAFEDEVTQIFERDLSTVEEPPDRQFLDVQRLSRPLYTETPQGYVRVSRLGRRATIRTRSGAQVGAQVHFYRDLSTINTEEPIEMQLLGEHSGDSTIVQGPVESSIVDVNIDEPDGLEVGRQETPSVEDVDFNSEDLLLDEGVEDFSGSQLVVGTRRSTNTLTVPRFETPRDTSFYIQDIQGYTVSYPESRQTTDIIFPHPDTPTVVIHINDTSGDYYLHPSLQRKKRKRKYL</sequence>
<organism>
    <name type="scientific">Human papillomavirus 9</name>
    <dbReference type="NCBI Taxonomy" id="10621"/>
    <lineage>
        <taxon>Viruses</taxon>
        <taxon>Monodnaviria</taxon>
        <taxon>Shotokuvirae</taxon>
        <taxon>Cossaviricota</taxon>
        <taxon>Papovaviricetes</taxon>
        <taxon>Zurhausenvirales</taxon>
        <taxon>Papillomaviridae</taxon>
        <taxon>Firstpapillomavirinae</taxon>
        <taxon>Betapapillomavirus</taxon>
        <taxon>Betapapillomavirus 2</taxon>
    </lineage>
</organism>
<keyword id="KW-0167">Capsid protein</keyword>
<keyword id="KW-1176">Cytoplasmic inwards viral transport</keyword>
<keyword id="KW-1015">Disulfide bond</keyword>
<keyword id="KW-0238">DNA-binding</keyword>
<keyword id="KW-1039">Host endosome</keyword>
<keyword id="KW-1040">Host Golgi apparatus</keyword>
<keyword id="KW-1048">Host nucleus</keyword>
<keyword id="KW-0945">Host-virus interaction</keyword>
<keyword id="KW-0426">Late protein</keyword>
<keyword id="KW-1177">Microtubular inwards viral transport</keyword>
<keyword id="KW-0597">Phosphoprotein</keyword>
<keyword id="KW-1185">Reference proteome</keyword>
<keyword id="KW-1163">Viral penetration into host nucleus</keyword>
<keyword id="KW-0946">Virion</keyword>
<keyword id="KW-1160">Virus entry into host cell</keyword>
<gene>
    <name evidence="1" type="primary">L2</name>
</gene>
<accession>P36746</accession>
<reference key="1">
    <citation type="journal article" date="1994" name="Curr. Top. Microbiol. Immunol.">
        <title>Primer-directed sequencing of human papillomavirus types.</title>
        <authorList>
            <person name="Delius H."/>
            <person name="Hofmann B."/>
        </authorList>
    </citation>
    <scope>NUCLEOTIDE SEQUENCE [GENOMIC DNA]</scope>
</reference>
<evidence type="ECO:0000255" key="1">
    <source>
        <dbReference type="HAMAP-Rule" id="MF_04003"/>
    </source>
</evidence>
<feature type="chain" id="PRO_0000133576" description="Minor capsid protein L2">
    <location>
        <begin position="1"/>
        <end position="533"/>
    </location>
</feature>
<feature type="short sequence motif" description="Nuclear localization signal" evidence="1">
    <location>
        <begin position="1"/>
        <end position="10"/>
    </location>
</feature>
<feature type="short sequence motif" description="Nuclear localization signal" evidence="1">
    <location>
        <begin position="525"/>
        <end position="532"/>
    </location>
</feature>
<feature type="disulfide bond" evidence="1">
    <location>
        <begin position="19"/>
        <end position="25"/>
    </location>
</feature>